<proteinExistence type="inferred from homology"/>
<protein>
    <recommendedName>
        <fullName evidence="1">Cell division protein ZapA</fullName>
    </recommendedName>
    <alternativeName>
        <fullName evidence="1">Z ring-associated protein ZapA</fullName>
    </alternativeName>
</protein>
<comment type="function">
    <text evidence="1">Activator of cell division through the inhibition of FtsZ GTPase activity, therefore promoting FtsZ assembly into bundles of protofilaments necessary for the formation of the division Z ring. It is recruited early at mid-cell but it is not essential for cell division.</text>
</comment>
<comment type="subunit">
    <text evidence="1">Homodimer. Interacts with FtsZ.</text>
</comment>
<comment type="subcellular location">
    <subcellularLocation>
        <location evidence="1">Cytoplasm</location>
    </subcellularLocation>
    <text evidence="1">Localizes at mid-cell.</text>
</comment>
<comment type="similarity">
    <text evidence="1">Belongs to the ZapA family. Type 1 subfamily.</text>
</comment>
<reference key="1">
    <citation type="journal article" date="2009" name="PLoS Genet.">
        <title>Organised genome dynamics in the Escherichia coli species results in highly diverse adaptive paths.</title>
        <authorList>
            <person name="Touchon M."/>
            <person name="Hoede C."/>
            <person name="Tenaillon O."/>
            <person name="Barbe V."/>
            <person name="Baeriswyl S."/>
            <person name="Bidet P."/>
            <person name="Bingen E."/>
            <person name="Bonacorsi S."/>
            <person name="Bouchier C."/>
            <person name="Bouvet O."/>
            <person name="Calteau A."/>
            <person name="Chiapello H."/>
            <person name="Clermont O."/>
            <person name="Cruveiller S."/>
            <person name="Danchin A."/>
            <person name="Diard M."/>
            <person name="Dossat C."/>
            <person name="Karoui M.E."/>
            <person name="Frapy E."/>
            <person name="Garry L."/>
            <person name="Ghigo J.M."/>
            <person name="Gilles A.M."/>
            <person name="Johnson J."/>
            <person name="Le Bouguenec C."/>
            <person name="Lescat M."/>
            <person name="Mangenot S."/>
            <person name="Martinez-Jehanne V."/>
            <person name="Matic I."/>
            <person name="Nassif X."/>
            <person name="Oztas S."/>
            <person name="Petit M.A."/>
            <person name="Pichon C."/>
            <person name="Rouy Z."/>
            <person name="Ruf C.S."/>
            <person name="Schneider D."/>
            <person name="Tourret J."/>
            <person name="Vacherie B."/>
            <person name="Vallenet D."/>
            <person name="Medigue C."/>
            <person name="Rocha E.P.C."/>
            <person name="Denamur E."/>
        </authorList>
    </citation>
    <scope>NUCLEOTIDE SEQUENCE [LARGE SCALE GENOMIC DNA]</scope>
    <source>
        <strain>ED1a</strain>
    </source>
</reference>
<feature type="chain" id="PRO_1000189511" description="Cell division protein ZapA">
    <location>
        <begin position="1"/>
        <end position="109"/>
    </location>
</feature>
<feature type="coiled-coil region" evidence="1">
    <location>
        <begin position="21"/>
        <end position="99"/>
    </location>
</feature>
<name>ZAPA_ECO81</name>
<sequence length="109" mass="12594">MSAQPVDIQIFGRSLRVNCPPDQRDALNQAADDLNQRLQDLKERTRVTNTEQLVFIAALNISYELAQEKAKTRDYAASMEQRIRMLQQTIEQALLEQGRITEKTNQNFE</sequence>
<keyword id="KW-0131">Cell cycle</keyword>
<keyword id="KW-0132">Cell division</keyword>
<keyword id="KW-0175">Coiled coil</keyword>
<keyword id="KW-0963">Cytoplasm</keyword>
<keyword id="KW-0717">Septation</keyword>
<organism>
    <name type="scientific">Escherichia coli O81 (strain ED1a)</name>
    <dbReference type="NCBI Taxonomy" id="585397"/>
    <lineage>
        <taxon>Bacteria</taxon>
        <taxon>Pseudomonadati</taxon>
        <taxon>Pseudomonadota</taxon>
        <taxon>Gammaproteobacteria</taxon>
        <taxon>Enterobacterales</taxon>
        <taxon>Enterobacteriaceae</taxon>
        <taxon>Escherichia</taxon>
    </lineage>
</organism>
<accession>B7MZK7</accession>
<dbReference type="EMBL" id="CU928162">
    <property type="protein sequence ID" value="CAR09525.2"/>
    <property type="molecule type" value="Genomic_DNA"/>
</dbReference>
<dbReference type="RefSeq" id="WP_001276008.1">
    <property type="nucleotide sequence ID" value="NC_011745.1"/>
</dbReference>
<dbReference type="SMR" id="B7MZK7"/>
<dbReference type="GeneID" id="93779091"/>
<dbReference type="KEGG" id="ecq:ECED1_3369"/>
<dbReference type="HOGENOM" id="CLU_116623_3_0_6"/>
<dbReference type="Proteomes" id="UP000000748">
    <property type="component" value="Chromosome"/>
</dbReference>
<dbReference type="GO" id="GO:0032153">
    <property type="term" value="C:cell division site"/>
    <property type="evidence" value="ECO:0007669"/>
    <property type="project" value="TreeGrafter"/>
</dbReference>
<dbReference type="GO" id="GO:0030428">
    <property type="term" value="C:cell septum"/>
    <property type="evidence" value="ECO:0007669"/>
    <property type="project" value="TreeGrafter"/>
</dbReference>
<dbReference type="GO" id="GO:0005829">
    <property type="term" value="C:cytosol"/>
    <property type="evidence" value="ECO:0007669"/>
    <property type="project" value="TreeGrafter"/>
</dbReference>
<dbReference type="GO" id="GO:0005886">
    <property type="term" value="C:plasma membrane"/>
    <property type="evidence" value="ECO:0007669"/>
    <property type="project" value="UniProtKB-UniRule"/>
</dbReference>
<dbReference type="GO" id="GO:0000917">
    <property type="term" value="P:division septum assembly"/>
    <property type="evidence" value="ECO:0007669"/>
    <property type="project" value="UniProtKB-KW"/>
</dbReference>
<dbReference type="GO" id="GO:0043093">
    <property type="term" value="P:FtsZ-dependent cytokinesis"/>
    <property type="evidence" value="ECO:0007669"/>
    <property type="project" value="TreeGrafter"/>
</dbReference>
<dbReference type="GO" id="GO:0000921">
    <property type="term" value="P:septin ring assembly"/>
    <property type="evidence" value="ECO:0007669"/>
    <property type="project" value="TreeGrafter"/>
</dbReference>
<dbReference type="FunFam" id="1.20.5.50:FF:000001">
    <property type="entry name" value="Cell division protein ZapA"/>
    <property type="match status" value="1"/>
</dbReference>
<dbReference type="FunFam" id="3.30.160.880:FF:000001">
    <property type="entry name" value="Cell division protein ZapA"/>
    <property type="match status" value="1"/>
</dbReference>
<dbReference type="Gene3D" id="1.20.5.50">
    <property type="match status" value="1"/>
</dbReference>
<dbReference type="Gene3D" id="3.30.160.880">
    <property type="entry name" value="Cell division protein ZapA protomer, N-terminal domain"/>
    <property type="match status" value="1"/>
</dbReference>
<dbReference type="HAMAP" id="MF_02012">
    <property type="entry name" value="ZapA_type1"/>
    <property type="match status" value="1"/>
</dbReference>
<dbReference type="InterPro" id="IPR007838">
    <property type="entry name" value="Cell_div_ZapA-like"/>
</dbReference>
<dbReference type="InterPro" id="IPR036192">
    <property type="entry name" value="Cell_div_ZapA-like_sf"/>
</dbReference>
<dbReference type="InterPro" id="IPR023771">
    <property type="entry name" value="Cell_div_ZapA_eubact"/>
</dbReference>
<dbReference type="InterPro" id="IPR042233">
    <property type="entry name" value="Cell_div_ZapA_N"/>
</dbReference>
<dbReference type="NCBIfam" id="NF008209">
    <property type="entry name" value="PRK10972.1"/>
    <property type="match status" value="1"/>
</dbReference>
<dbReference type="PANTHER" id="PTHR34981">
    <property type="entry name" value="CELL DIVISION PROTEIN ZAPA"/>
    <property type="match status" value="1"/>
</dbReference>
<dbReference type="PANTHER" id="PTHR34981:SF1">
    <property type="entry name" value="CELL DIVISION PROTEIN ZAPA"/>
    <property type="match status" value="1"/>
</dbReference>
<dbReference type="Pfam" id="PF05164">
    <property type="entry name" value="ZapA"/>
    <property type="match status" value="1"/>
</dbReference>
<dbReference type="SUPFAM" id="SSF102829">
    <property type="entry name" value="Cell division protein ZapA-like"/>
    <property type="match status" value="1"/>
</dbReference>
<evidence type="ECO:0000255" key="1">
    <source>
        <dbReference type="HAMAP-Rule" id="MF_02012"/>
    </source>
</evidence>
<gene>
    <name evidence="1" type="primary">zapA</name>
    <name type="ordered locus">ECED1_3369</name>
</gene>